<organism>
    <name type="scientific">Thermotoga sp. (strain RQ2)</name>
    <dbReference type="NCBI Taxonomy" id="126740"/>
    <lineage>
        <taxon>Bacteria</taxon>
        <taxon>Thermotogati</taxon>
        <taxon>Thermotogota</taxon>
        <taxon>Thermotogae</taxon>
        <taxon>Thermotogales</taxon>
        <taxon>Thermotogaceae</taxon>
        <taxon>Thermotoga</taxon>
    </lineage>
</organism>
<evidence type="ECO:0000255" key="1">
    <source>
        <dbReference type="HAMAP-Rule" id="MF_00244"/>
    </source>
</evidence>
<comment type="function">
    <text evidence="1">Catalyzes the reversible adenylation of nicotinate mononucleotide (NaMN) to nicotinic acid adenine dinucleotide (NaAD).</text>
</comment>
<comment type="catalytic activity">
    <reaction evidence="1">
        <text>nicotinate beta-D-ribonucleotide + ATP + H(+) = deamido-NAD(+) + diphosphate</text>
        <dbReference type="Rhea" id="RHEA:22860"/>
        <dbReference type="ChEBI" id="CHEBI:15378"/>
        <dbReference type="ChEBI" id="CHEBI:30616"/>
        <dbReference type="ChEBI" id="CHEBI:33019"/>
        <dbReference type="ChEBI" id="CHEBI:57502"/>
        <dbReference type="ChEBI" id="CHEBI:58437"/>
        <dbReference type="EC" id="2.7.7.18"/>
    </reaction>
</comment>
<comment type="pathway">
    <text evidence="1">Cofactor biosynthesis; NAD(+) biosynthesis; deamido-NAD(+) from nicotinate D-ribonucleotide: step 1/1.</text>
</comment>
<comment type="similarity">
    <text evidence="1">Belongs to the NadD family.</text>
</comment>
<name>NADD_THESQ</name>
<gene>
    <name evidence="1" type="primary">nadD</name>
    <name type="ordered locus">TRQ2_0850</name>
</gene>
<reference key="1">
    <citation type="journal article" date="2011" name="J. Bacteriol.">
        <title>Genome sequence of Thermotoga sp. strain RQ2, a hyperthermophilic bacterium isolated from a geothermally heated region of the seafloor near Ribeira Quente, the Azores.</title>
        <authorList>
            <person name="Swithers K.S."/>
            <person name="DiPippo J.L."/>
            <person name="Bruce D.C."/>
            <person name="Detter C."/>
            <person name="Tapia R."/>
            <person name="Han S."/>
            <person name="Saunders E."/>
            <person name="Goodwin L.A."/>
            <person name="Han J."/>
            <person name="Woyke T."/>
            <person name="Pitluck S."/>
            <person name="Pennacchio L."/>
            <person name="Nolan M."/>
            <person name="Mikhailova N."/>
            <person name="Lykidis A."/>
            <person name="Land M.L."/>
            <person name="Brettin T."/>
            <person name="Stetter K.O."/>
            <person name="Nelson K.E."/>
            <person name="Gogarten J.P."/>
            <person name="Noll K.M."/>
        </authorList>
    </citation>
    <scope>NUCLEOTIDE SEQUENCE [LARGE SCALE GENOMIC DNA]</scope>
    <source>
        <strain>RQ2</strain>
    </source>
</reference>
<feature type="chain" id="PRO_1000100800" description="Probable nicotinate-nucleotide adenylyltransferase">
    <location>
        <begin position="1"/>
        <end position="196"/>
    </location>
</feature>
<accession>B1LA54</accession>
<protein>
    <recommendedName>
        <fullName evidence="1">Probable nicotinate-nucleotide adenylyltransferase</fullName>
        <ecNumber evidence="1">2.7.7.18</ecNumber>
    </recommendedName>
    <alternativeName>
        <fullName evidence="1">Deamido-NAD(+) diphosphorylase</fullName>
    </alternativeName>
    <alternativeName>
        <fullName evidence="1">Deamido-NAD(+) pyrophosphorylase</fullName>
    </alternativeName>
    <alternativeName>
        <fullName evidence="1">Nicotinate mononucleotide adenylyltransferase</fullName>
        <shortName evidence="1">NaMN adenylyltransferase</shortName>
    </alternativeName>
</protein>
<keyword id="KW-0067">ATP-binding</keyword>
<keyword id="KW-0520">NAD</keyword>
<keyword id="KW-0547">Nucleotide-binding</keyword>
<keyword id="KW-0548">Nucleotidyltransferase</keyword>
<keyword id="KW-0662">Pyridine nucleotide biosynthesis</keyword>
<keyword id="KW-0808">Transferase</keyword>
<sequence>MNTGNRIGIFGGSFDPVHTGHVLVSVYTLEILDLDRLIVVPVFNPPHKKTVAPFEKRFEWLKKVFEGMEKVEVSDYEKGRGGVSYSIFTIEYFSEIYKTKPFFIVGEDALSYFEKWYRYRDILEKSTLVVYPRYCGKPYHEHARRVLGDLSEIVFLDMPIVQISSTEIRERARIGKTLKGFVPEEIREEVEVFYGA</sequence>
<dbReference type="EC" id="2.7.7.18" evidence="1"/>
<dbReference type="EMBL" id="CP000969">
    <property type="protein sequence ID" value="ACB09202.1"/>
    <property type="molecule type" value="Genomic_DNA"/>
</dbReference>
<dbReference type="SMR" id="B1LA54"/>
<dbReference type="KEGG" id="trq:TRQ2_0850"/>
<dbReference type="HOGENOM" id="CLU_069765_3_2_0"/>
<dbReference type="UniPathway" id="UPA00253">
    <property type="reaction ID" value="UER00332"/>
</dbReference>
<dbReference type="Proteomes" id="UP000001687">
    <property type="component" value="Chromosome"/>
</dbReference>
<dbReference type="GO" id="GO:0005524">
    <property type="term" value="F:ATP binding"/>
    <property type="evidence" value="ECO:0007669"/>
    <property type="project" value="UniProtKB-KW"/>
</dbReference>
<dbReference type="GO" id="GO:0004515">
    <property type="term" value="F:nicotinate-nucleotide adenylyltransferase activity"/>
    <property type="evidence" value="ECO:0007669"/>
    <property type="project" value="UniProtKB-UniRule"/>
</dbReference>
<dbReference type="GO" id="GO:0009435">
    <property type="term" value="P:NAD biosynthetic process"/>
    <property type="evidence" value="ECO:0007669"/>
    <property type="project" value="UniProtKB-UniRule"/>
</dbReference>
<dbReference type="CDD" id="cd02165">
    <property type="entry name" value="NMNAT"/>
    <property type="match status" value="1"/>
</dbReference>
<dbReference type="Gene3D" id="3.40.50.620">
    <property type="entry name" value="HUPs"/>
    <property type="match status" value="1"/>
</dbReference>
<dbReference type="HAMAP" id="MF_00244">
    <property type="entry name" value="NaMN_adenylyltr"/>
    <property type="match status" value="1"/>
</dbReference>
<dbReference type="InterPro" id="IPR004821">
    <property type="entry name" value="Cyt_trans-like"/>
</dbReference>
<dbReference type="InterPro" id="IPR005248">
    <property type="entry name" value="NadD/NMNAT"/>
</dbReference>
<dbReference type="InterPro" id="IPR014729">
    <property type="entry name" value="Rossmann-like_a/b/a_fold"/>
</dbReference>
<dbReference type="NCBIfam" id="TIGR00125">
    <property type="entry name" value="cyt_tran_rel"/>
    <property type="match status" value="1"/>
</dbReference>
<dbReference type="NCBIfam" id="TIGR00482">
    <property type="entry name" value="nicotinate (nicotinamide) nucleotide adenylyltransferase"/>
    <property type="match status" value="1"/>
</dbReference>
<dbReference type="PANTHER" id="PTHR39321">
    <property type="entry name" value="NICOTINATE-NUCLEOTIDE ADENYLYLTRANSFERASE-RELATED"/>
    <property type="match status" value="1"/>
</dbReference>
<dbReference type="PANTHER" id="PTHR39321:SF3">
    <property type="entry name" value="PHOSPHOPANTETHEINE ADENYLYLTRANSFERASE"/>
    <property type="match status" value="1"/>
</dbReference>
<dbReference type="Pfam" id="PF01467">
    <property type="entry name" value="CTP_transf_like"/>
    <property type="match status" value="1"/>
</dbReference>
<dbReference type="SUPFAM" id="SSF52374">
    <property type="entry name" value="Nucleotidylyl transferase"/>
    <property type="match status" value="1"/>
</dbReference>
<proteinExistence type="inferred from homology"/>